<protein>
    <recommendedName>
        <fullName>Anaphase-promoting complex subunit 11</fullName>
        <shortName>APC11</shortName>
    </recommendedName>
</protein>
<feature type="chain" id="PRO_0000328533" description="Anaphase-promoting complex subunit 11">
    <location>
        <begin position="1"/>
        <end position="87"/>
    </location>
</feature>
<feature type="zinc finger region" description="RING-type; atypical" evidence="2">
    <location>
        <begin position="35"/>
        <end position="77"/>
    </location>
</feature>
<gene>
    <name type="primary">anapc11</name>
    <name type="synonym">apc11</name>
    <name type="ORF">DDB_G0286909</name>
</gene>
<sequence length="87" mass="10137">MKVTIKSIWNTVSAWHWDVNEECCGICRMAFDGCCVDCKIPGDDCPPVWGVCNHAFHMHCILKWLNANELQQCPMCRSEWRFKSDEK</sequence>
<name>APC11_DICDI</name>
<keyword id="KW-0131">Cell cycle</keyword>
<keyword id="KW-0132">Cell division</keyword>
<keyword id="KW-0479">Metal-binding</keyword>
<keyword id="KW-0498">Mitosis</keyword>
<keyword id="KW-0539">Nucleus</keyword>
<keyword id="KW-1185">Reference proteome</keyword>
<keyword id="KW-0833">Ubl conjugation pathway</keyword>
<keyword id="KW-0862">Zinc</keyword>
<keyword id="KW-0863">Zinc-finger</keyword>
<evidence type="ECO:0000250" key="1"/>
<evidence type="ECO:0000255" key="2">
    <source>
        <dbReference type="PROSITE-ProRule" id="PRU00175"/>
    </source>
</evidence>
<evidence type="ECO:0000305" key="3"/>
<reference key="1">
    <citation type="journal article" date="2005" name="Nature">
        <title>The genome of the social amoeba Dictyostelium discoideum.</title>
        <authorList>
            <person name="Eichinger L."/>
            <person name="Pachebat J.A."/>
            <person name="Gloeckner G."/>
            <person name="Rajandream M.A."/>
            <person name="Sucgang R."/>
            <person name="Berriman M."/>
            <person name="Song J."/>
            <person name="Olsen R."/>
            <person name="Szafranski K."/>
            <person name="Xu Q."/>
            <person name="Tunggal B."/>
            <person name="Kummerfeld S."/>
            <person name="Madera M."/>
            <person name="Konfortov B.A."/>
            <person name="Rivero F."/>
            <person name="Bankier A.T."/>
            <person name="Lehmann R."/>
            <person name="Hamlin N."/>
            <person name="Davies R."/>
            <person name="Gaudet P."/>
            <person name="Fey P."/>
            <person name="Pilcher K."/>
            <person name="Chen G."/>
            <person name="Saunders D."/>
            <person name="Sodergren E.J."/>
            <person name="Davis P."/>
            <person name="Kerhornou A."/>
            <person name="Nie X."/>
            <person name="Hall N."/>
            <person name="Anjard C."/>
            <person name="Hemphill L."/>
            <person name="Bason N."/>
            <person name="Farbrother P."/>
            <person name="Desany B."/>
            <person name="Just E."/>
            <person name="Morio T."/>
            <person name="Rost R."/>
            <person name="Churcher C.M."/>
            <person name="Cooper J."/>
            <person name="Haydock S."/>
            <person name="van Driessche N."/>
            <person name="Cronin A."/>
            <person name="Goodhead I."/>
            <person name="Muzny D.M."/>
            <person name="Mourier T."/>
            <person name="Pain A."/>
            <person name="Lu M."/>
            <person name="Harper D."/>
            <person name="Lindsay R."/>
            <person name="Hauser H."/>
            <person name="James K.D."/>
            <person name="Quiles M."/>
            <person name="Madan Babu M."/>
            <person name="Saito T."/>
            <person name="Buchrieser C."/>
            <person name="Wardroper A."/>
            <person name="Felder M."/>
            <person name="Thangavelu M."/>
            <person name="Johnson D."/>
            <person name="Knights A."/>
            <person name="Loulseged H."/>
            <person name="Mungall K.L."/>
            <person name="Oliver K."/>
            <person name="Price C."/>
            <person name="Quail M.A."/>
            <person name="Urushihara H."/>
            <person name="Hernandez J."/>
            <person name="Rabbinowitsch E."/>
            <person name="Steffen D."/>
            <person name="Sanders M."/>
            <person name="Ma J."/>
            <person name="Kohara Y."/>
            <person name="Sharp S."/>
            <person name="Simmonds M.N."/>
            <person name="Spiegler S."/>
            <person name="Tivey A."/>
            <person name="Sugano S."/>
            <person name="White B."/>
            <person name="Walker D."/>
            <person name="Woodward J.R."/>
            <person name="Winckler T."/>
            <person name="Tanaka Y."/>
            <person name="Shaulsky G."/>
            <person name="Schleicher M."/>
            <person name="Weinstock G.M."/>
            <person name="Rosenthal A."/>
            <person name="Cox E.C."/>
            <person name="Chisholm R.L."/>
            <person name="Gibbs R.A."/>
            <person name="Loomis W.F."/>
            <person name="Platzer M."/>
            <person name="Kay R.R."/>
            <person name="Williams J.G."/>
            <person name="Dear P.H."/>
            <person name="Noegel A.A."/>
            <person name="Barrell B.G."/>
            <person name="Kuspa A."/>
        </authorList>
    </citation>
    <scope>NUCLEOTIDE SEQUENCE [LARGE SCALE GENOMIC DNA]</scope>
    <source>
        <strain>AX4</strain>
    </source>
</reference>
<proteinExistence type="inferred from homology"/>
<accession>Q54L48</accession>
<organism>
    <name type="scientific">Dictyostelium discoideum</name>
    <name type="common">Social amoeba</name>
    <dbReference type="NCBI Taxonomy" id="44689"/>
    <lineage>
        <taxon>Eukaryota</taxon>
        <taxon>Amoebozoa</taxon>
        <taxon>Evosea</taxon>
        <taxon>Eumycetozoa</taxon>
        <taxon>Dictyostelia</taxon>
        <taxon>Dictyosteliales</taxon>
        <taxon>Dictyosteliaceae</taxon>
        <taxon>Dictyostelium</taxon>
    </lineage>
</organism>
<comment type="function">
    <text evidence="1">Component of the anaphase promoting complex/cyclosome (APC/C), a cell cycle-regulated E3 ubiquitin-protein ligase complex that controls progression through mitosis and the G1 phase of the cell cycle.</text>
</comment>
<comment type="pathway">
    <text>Protein modification; protein ubiquitination.</text>
</comment>
<comment type="subunit">
    <text evidence="1">The APC/C is composed of at least 13 subunits that stay tightly associated throughout the cell cycle: anapc1, anapc2, anapc3, anapc4, anapc5, anapc6, anapc7, anapc8, anapc10, anapc11, cdc20, cdc26 and cdh1.</text>
</comment>
<comment type="subcellular location">
    <subcellularLocation>
        <location evidence="1">Nucleus</location>
    </subcellularLocation>
</comment>
<comment type="similarity">
    <text evidence="3">Belongs to the RING-box family.</text>
</comment>
<dbReference type="EMBL" id="AAFI02000092">
    <property type="protein sequence ID" value="EAL63952.1"/>
    <property type="molecule type" value="Genomic_DNA"/>
</dbReference>
<dbReference type="RefSeq" id="XP_637455.1">
    <property type="nucleotide sequence ID" value="XM_632363.1"/>
</dbReference>
<dbReference type="SMR" id="Q54L48"/>
<dbReference type="FunCoup" id="Q54L48">
    <property type="interactions" value="412"/>
</dbReference>
<dbReference type="STRING" id="44689.Q54L48"/>
<dbReference type="PaxDb" id="44689-DDB0231277"/>
<dbReference type="EnsemblProtists" id="EAL63952">
    <property type="protein sequence ID" value="EAL63952"/>
    <property type="gene ID" value="DDB_G0286909"/>
</dbReference>
<dbReference type="GeneID" id="8625855"/>
<dbReference type="KEGG" id="ddi:DDB_G0286909"/>
<dbReference type="dictyBase" id="DDB_G0286909">
    <property type="gene designation" value="anapc11"/>
</dbReference>
<dbReference type="VEuPathDB" id="AmoebaDB:DDB_G0286909"/>
<dbReference type="eggNOG" id="KOG1493">
    <property type="taxonomic scope" value="Eukaryota"/>
</dbReference>
<dbReference type="HOGENOM" id="CLU_115512_0_1_1"/>
<dbReference type="InParanoid" id="Q54L48"/>
<dbReference type="OMA" id="PMCRSEW"/>
<dbReference type="PhylomeDB" id="Q54L48"/>
<dbReference type="Reactome" id="R-DDI-141430">
    <property type="pathway name" value="Inactivation of APC/C via direct inhibition of the APC/C complex"/>
</dbReference>
<dbReference type="Reactome" id="R-DDI-174048">
    <property type="pathway name" value="APC/C:Cdc20 mediated degradation of Cyclin B"/>
</dbReference>
<dbReference type="Reactome" id="R-DDI-174084">
    <property type="pathway name" value="Autodegradation of Cdh1 by Cdh1:APC/C"/>
</dbReference>
<dbReference type="Reactome" id="R-DDI-174154">
    <property type="pathway name" value="APC/C:Cdc20 mediated degradation of Securin"/>
</dbReference>
<dbReference type="Reactome" id="R-DDI-174178">
    <property type="pathway name" value="APC/C:Cdh1 mediated degradation of Cdc20 and other APC/C:Cdh1 targeted proteins in late mitosis/early G1"/>
</dbReference>
<dbReference type="Reactome" id="R-DDI-174184">
    <property type="pathway name" value="Cdc20:Phospho-APC/C mediated degradation of Cyclin A"/>
</dbReference>
<dbReference type="Reactome" id="R-DDI-176407">
    <property type="pathway name" value="Conversion from APC/C:Cdc20 to APC/C:Cdh1 in late anaphase"/>
</dbReference>
<dbReference type="Reactome" id="R-DDI-176408">
    <property type="pathway name" value="Regulation of APC/C activators between G1/S and early anaphase"/>
</dbReference>
<dbReference type="Reactome" id="R-DDI-176409">
    <property type="pathway name" value="APC/C:Cdc20 mediated degradation of mitotic proteins"/>
</dbReference>
<dbReference type="Reactome" id="R-DDI-176412">
    <property type="pathway name" value="Phosphorylation of the APC/C"/>
</dbReference>
<dbReference type="Reactome" id="R-DDI-179409">
    <property type="pathway name" value="APC-Cdc20 mediated degradation of Nek2A"/>
</dbReference>
<dbReference type="Reactome" id="R-DDI-2467813">
    <property type="pathway name" value="Separation of Sister Chromatids"/>
</dbReference>
<dbReference type="Reactome" id="R-DDI-2559582">
    <property type="pathway name" value="Senescence-Associated Secretory Phenotype (SASP)"/>
</dbReference>
<dbReference type="Reactome" id="R-DDI-69017">
    <property type="pathway name" value="CDK-mediated phosphorylation and removal of Cdc6"/>
</dbReference>
<dbReference type="Reactome" id="R-DDI-983168">
    <property type="pathway name" value="Antigen processing: Ubiquitination &amp; Proteasome degradation"/>
</dbReference>
<dbReference type="UniPathway" id="UPA00143"/>
<dbReference type="PRO" id="PR:Q54L48"/>
<dbReference type="Proteomes" id="UP000002195">
    <property type="component" value="Chromosome 4"/>
</dbReference>
<dbReference type="GO" id="GO:0005680">
    <property type="term" value="C:anaphase-promoting complex"/>
    <property type="evidence" value="ECO:0000250"/>
    <property type="project" value="dictyBase"/>
</dbReference>
<dbReference type="GO" id="GO:0005634">
    <property type="term" value="C:nucleus"/>
    <property type="evidence" value="ECO:0000318"/>
    <property type="project" value="GO_Central"/>
</dbReference>
<dbReference type="GO" id="GO:0097602">
    <property type="term" value="F:cullin family protein binding"/>
    <property type="evidence" value="ECO:0000318"/>
    <property type="project" value="GO_Central"/>
</dbReference>
<dbReference type="GO" id="GO:0061630">
    <property type="term" value="F:ubiquitin protein ligase activity"/>
    <property type="evidence" value="ECO:0000318"/>
    <property type="project" value="GO_Central"/>
</dbReference>
<dbReference type="GO" id="GO:0004842">
    <property type="term" value="F:ubiquitin-protein transferase activity"/>
    <property type="evidence" value="ECO:0000250"/>
    <property type="project" value="dictyBase"/>
</dbReference>
<dbReference type="GO" id="GO:0008270">
    <property type="term" value="F:zinc ion binding"/>
    <property type="evidence" value="ECO:0007669"/>
    <property type="project" value="UniProtKB-KW"/>
</dbReference>
<dbReference type="GO" id="GO:0031145">
    <property type="term" value="P:anaphase-promoting complex-dependent catabolic process"/>
    <property type="evidence" value="ECO:0007669"/>
    <property type="project" value="InterPro"/>
</dbReference>
<dbReference type="GO" id="GO:0051301">
    <property type="term" value="P:cell division"/>
    <property type="evidence" value="ECO:0007669"/>
    <property type="project" value="UniProtKB-KW"/>
</dbReference>
<dbReference type="GO" id="GO:0045842">
    <property type="term" value="P:positive regulation of mitotic metaphase/anaphase transition"/>
    <property type="evidence" value="ECO:0000318"/>
    <property type="project" value="GO_Central"/>
</dbReference>
<dbReference type="GO" id="GO:0016567">
    <property type="term" value="P:protein ubiquitination"/>
    <property type="evidence" value="ECO:0000318"/>
    <property type="project" value="GO_Central"/>
</dbReference>
<dbReference type="GO" id="GO:0006511">
    <property type="term" value="P:ubiquitin-dependent protein catabolic process"/>
    <property type="evidence" value="ECO:0000250"/>
    <property type="project" value="dictyBase"/>
</dbReference>
<dbReference type="CDD" id="cd16456">
    <property type="entry name" value="RING-H2_APC11"/>
    <property type="match status" value="1"/>
</dbReference>
<dbReference type="FunFam" id="3.30.40.10:FF:000111">
    <property type="entry name" value="Anaphase-promoting complex subunit 11"/>
    <property type="match status" value="1"/>
</dbReference>
<dbReference type="Gene3D" id="3.30.40.10">
    <property type="entry name" value="Zinc/RING finger domain, C3HC4 (zinc finger)"/>
    <property type="match status" value="1"/>
</dbReference>
<dbReference type="InterPro" id="IPR051031">
    <property type="entry name" value="RING-box_E3_Ubiquitin_Ligase"/>
</dbReference>
<dbReference type="InterPro" id="IPR024991">
    <property type="entry name" value="RING-H2_APC11"/>
</dbReference>
<dbReference type="InterPro" id="IPR001841">
    <property type="entry name" value="Znf_RING"/>
</dbReference>
<dbReference type="InterPro" id="IPR013083">
    <property type="entry name" value="Znf_RING/FYVE/PHD"/>
</dbReference>
<dbReference type="PANTHER" id="PTHR11210">
    <property type="entry name" value="RING BOX"/>
    <property type="match status" value="1"/>
</dbReference>
<dbReference type="Pfam" id="PF12861">
    <property type="entry name" value="zf-ANAPC11"/>
    <property type="match status" value="1"/>
</dbReference>
<dbReference type="SUPFAM" id="SSF57850">
    <property type="entry name" value="RING/U-box"/>
    <property type="match status" value="1"/>
</dbReference>
<dbReference type="PROSITE" id="PS50089">
    <property type="entry name" value="ZF_RING_2"/>
    <property type="match status" value="1"/>
</dbReference>